<feature type="chain" id="PRO_0000284533" description="Sorting nexin-30">
    <location>
        <begin position="1"/>
        <end position="437"/>
    </location>
</feature>
<feature type="domain" description="PX" evidence="6">
    <location>
        <begin position="89"/>
        <end position="210"/>
    </location>
</feature>
<feature type="domain" description="BAR" evidence="7">
    <location>
        <begin position="234"/>
        <end position="437"/>
    </location>
</feature>
<feature type="region of interest" description="Disordered" evidence="8">
    <location>
        <begin position="1"/>
        <end position="44"/>
    </location>
</feature>
<feature type="region of interest" description="Disordered" evidence="8">
    <location>
        <begin position="54"/>
        <end position="73"/>
    </location>
</feature>
<feature type="compositionally biased region" description="Low complexity" evidence="8">
    <location>
        <begin position="63"/>
        <end position="73"/>
    </location>
</feature>
<feature type="binding site" evidence="2">
    <location>
        <position position="132"/>
    </location>
    <ligand>
        <name>a 1,2-diacyl-sn-glycero-3-phospho-(1D-myo-inositol-3-phosphate)</name>
        <dbReference type="ChEBI" id="CHEBI:58088"/>
    </ligand>
</feature>
<feature type="binding site" evidence="2">
    <location>
        <position position="134"/>
    </location>
    <ligand>
        <name>a 1,2-diacyl-sn-glycero-3-phospho-(1D-myo-inositol-3-phosphate)</name>
        <dbReference type="ChEBI" id="CHEBI:58088"/>
    </ligand>
</feature>
<feature type="binding site" evidence="5">
    <location>
        <position position="162"/>
    </location>
    <ligand>
        <name>a 1,2-diacyl-sn-glycero-3-phospho-(1D-myo-inositol-3-phosphate)</name>
        <dbReference type="ChEBI" id="CHEBI:58088"/>
    </ligand>
</feature>
<feature type="binding site" evidence="3">
    <location>
        <position position="176"/>
    </location>
    <ligand>
        <name>a 1,2-diacyl-sn-glycero-3-phospho-(1D-myo-inositol-3-phosphate)</name>
        <dbReference type="ChEBI" id="CHEBI:58088"/>
    </ligand>
</feature>
<feature type="modified residue" description="Phosphothreonine" evidence="4">
    <location>
        <position position="38"/>
    </location>
</feature>
<feature type="modified residue" description="Phosphoserine" evidence="13 14">
    <location>
        <position position="40"/>
    </location>
</feature>
<feature type="sequence variant" id="VAR_031771" description="In dbSNP:rs1485070286.">
    <original>D</original>
    <variation>H</variation>
    <location>
        <position position="83"/>
    </location>
</feature>
<feature type="sequence variant" id="VAR_052483" description="In dbSNP:rs10117709.">
    <original>P</original>
    <variation>A</variation>
    <location>
        <position position="125"/>
    </location>
</feature>
<keyword id="KW-0967">Endosome</keyword>
<keyword id="KW-0472">Membrane</keyword>
<keyword id="KW-0597">Phosphoprotein</keyword>
<keyword id="KW-0653">Protein transport</keyword>
<keyword id="KW-1267">Proteomics identification</keyword>
<keyword id="KW-1185">Reference proteome</keyword>
<keyword id="KW-0813">Transport</keyword>
<comment type="function">
    <text evidence="9">Involved in the regulation of endocytosis and in several stages of intracellular trafficking (PubMed:32513819). Together with SNX4, involved in autophagosome assembly (PubMed:32513819).</text>
</comment>
<comment type="subunit">
    <text evidence="9">Heterodimer; heterodimerizes with SNX4.</text>
</comment>
<comment type="interaction">
    <interactant intactId="EBI-8099676">
        <id>Q5VWJ9</id>
    </interactant>
    <interactant intactId="EBI-724909">
        <id>O95219</id>
        <label>SNX4</label>
    </interactant>
    <organismsDiffer>false</organismsDiffer>
    <experiments>6</experiments>
</comment>
<comment type="subcellular location">
    <subcellularLocation>
        <location evidence="9">Early endosome membrane</location>
        <topology evidence="1">Peripheral membrane protein</topology>
        <orientation evidence="1">Cytoplasmic side</orientation>
    </subcellularLocation>
</comment>
<comment type="similarity">
    <text evidence="11">Belongs to the sorting nexin family.</text>
</comment>
<reference key="1">
    <citation type="journal article" date="2004" name="Nature">
        <title>DNA sequence and analysis of human chromosome 9.</title>
        <authorList>
            <person name="Humphray S.J."/>
            <person name="Oliver K."/>
            <person name="Hunt A.R."/>
            <person name="Plumb R.W."/>
            <person name="Loveland J.E."/>
            <person name="Howe K.L."/>
            <person name="Andrews T.D."/>
            <person name="Searle S."/>
            <person name="Hunt S.E."/>
            <person name="Scott C.E."/>
            <person name="Jones M.C."/>
            <person name="Ainscough R."/>
            <person name="Almeida J.P."/>
            <person name="Ambrose K.D."/>
            <person name="Ashwell R.I.S."/>
            <person name="Babbage A.K."/>
            <person name="Babbage S."/>
            <person name="Bagguley C.L."/>
            <person name="Bailey J."/>
            <person name="Banerjee R."/>
            <person name="Barker D.J."/>
            <person name="Barlow K.F."/>
            <person name="Bates K."/>
            <person name="Beasley H."/>
            <person name="Beasley O."/>
            <person name="Bird C.P."/>
            <person name="Bray-Allen S."/>
            <person name="Brown A.J."/>
            <person name="Brown J.Y."/>
            <person name="Burford D."/>
            <person name="Burrill W."/>
            <person name="Burton J."/>
            <person name="Carder C."/>
            <person name="Carter N.P."/>
            <person name="Chapman J.C."/>
            <person name="Chen Y."/>
            <person name="Clarke G."/>
            <person name="Clark S.Y."/>
            <person name="Clee C.M."/>
            <person name="Clegg S."/>
            <person name="Collier R.E."/>
            <person name="Corby N."/>
            <person name="Crosier M."/>
            <person name="Cummings A.T."/>
            <person name="Davies J."/>
            <person name="Dhami P."/>
            <person name="Dunn M."/>
            <person name="Dutta I."/>
            <person name="Dyer L.W."/>
            <person name="Earthrowl M.E."/>
            <person name="Faulkner L."/>
            <person name="Fleming C.J."/>
            <person name="Frankish A."/>
            <person name="Frankland J.A."/>
            <person name="French L."/>
            <person name="Fricker D.G."/>
            <person name="Garner P."/>
            <person name="Garnett J."/>
            <person name="Ghori J."/>
            <person name="Gilbert J.G.R."/>
            <person name="Glison C."/>
            <person name="Grafham D.V."/>
            <person name="Gribble S."/>
            <person name="Griffiths C."/>
            <person name="Griffiths-Jones S."/>
            <person name="Grocock R."/>
            <person name="Guy J."/>
            <person name="Hall R.E."/>
            <person name="Hammond S."/>
            <person name="Harley J.L."/>
            <person name="Harrison E.S.I."/>
            <person name="Hart E.A."/>
            <person name="Heath P.D."/>
            <person name="Henderson C.D."/>
            <person name="Hopkins B.L."/>
            <person name="Howard P.J."/>
            <person name="Howden P.J."/>
            <person name="Huckle E."/>
            <person name="Johnson C."/>
            <person name="Johnson D."/>
            <person name="Joy A.A."/>
            <person name="Kay M."/>
            <person name="Keenan S."/>
            <person name="Kershaw J.K."/>
            <person name="Kimberley A.M."/>
            <person name="King A."/>
            <person name="Knights A."/>
            <person name="Laird G.K."/>
            <person name="Langford C."/>
            <person name="Lawlor S."/>
            <person name="Leongamornlert D.A."/>
            <person name="Leversha M."/>
            <person name="Lloyd C."/>
            <person name="Lloyd D.M."/>
            <person name="Lovell J."/>
            <person name="Martin S."/>
            <person name="Mashreghi-Mohammadi M."/>
            <person name="Matthews L."/>
            <person name="McLaren S."/>
            <person name="McLay K.E."/>
            <person name="McMurray A."/>
            <person name="Milne S."/>
            <person name="Nickerson T."/>
            <person name="Nisbett J."/>
            <person name="Nordsiek G."/>
            <person name="Pearce A.V."/>
            <person name="Peck A.I."/>
            <person name="Porter K.M."/>
            <person name="Pandian R."/>
            <person name="Pelan S."/>
            <person name="Phillimore B."/>
            <person name="Povey S."/>
            <person name="Ramsey Y."/>
            <person name="Rand V."/>
            <person name="Scharfe M."/>
            <person name="Sehra H.K."/>
            <person name="Shownkeen R."/>
            <person name="Sims S.K."/>
            <person name="Skuce C.D."/>
            <person name="Smith M."/>
            <person name="Steward C.A."/>
            <person name="Swarbreck D."/>
            <person name="Sycamore N."/>
            <person name="Tester J."/>
            <person name="Thorpe A."/>
            <person name="Tracey A."/>
            <person name="Tromans A."/>
            <person name="Thomas D.W."/>
            <person name="Wall M."/>
            <person name="Wallis J.M."/>
            <person name="West A.P."/>
            <person name="Whitehead S.L."/>
            <person name="Willey D.L."/>
            <person name="Williams S.A."/>
            <person name="Wilming L."/>
            <person name="Wray P.W."/>
            <person name="Young L."/>
            <person name="Ashurst J.L."/>
            <person name="Coulson A."/>
            <person name="Blocker H."/>
            <person name="Durbin R.M."/>
            <person name="Sulston J.E."/>
            <person name="Hubbard T."/>
            <person name="Jackson M.J."/>
            <person name="Bentley D.R."/>
            <person name="Beck S."/>
            <person name="Rogers J."/>
            <person name="Dunham I."/>
        </authorList>
    </citation>
    <scope>NUCLEOTIDE SEQUENCE [LARGE SCALE GENOMIC DNA]</scope>
</reference>
<reference key="2">
    <citation type="journal article" date="2008" name="Proc. Natl. Acad. Sci. U.S.A.">
        <title>A quantitative atlas of mitotic phosphorylation.</title>
        <authorList>
            <person name="Dephoure N."/>
            <person name="Zhou C."/>
            <person name="Villen J."/>
            <person name="Beausoleil S.A."/>
            <person name="Bakalarski C.E."/>
            <person name="Elledge S.J."/>
            <person name="Gygi S.P."/>
        </authorList>
    </citation>
    <scope>PHOSPHORYLATION [LARGE SCALE ANALYSIS] AT SER-40</scope>
    <scope>IDENTIFICATION BY MASS SPECTROMETRY [LARGE SCALE ANALYSIS]</scope>
    <source>
        <tissue>Cervix carcinoma</tissue>
    </source>
</reference>
<reference key="3">
    <citation type="journal article" date="2010" name="Sci. Signal.">
        <title>Quantitative phosphoproteomics reveals widespread full phosphorylation site occupancy during mitosis.</title>
        <authorList>
            <person name="Olsen J.V."/>
            <person name="Vermeulen M."/>
            <person name="Santamaria A."/>
            <person name="Kumar C."/>
            <person name="Miller M.L."/>
            <person name="Jensen L.J."/>
            <person name="Gnad F."/>
            <person name="Cox J."/>
            <person name="Jensen T.S."/>
            <person name="Nigg E.A."/>
            <person name="Brunak S."/>
            <person name="Mann M."/>
        </authorList>
    </citation>
    <scope>PHOSPHORYLATION [LARGE SCALE ANALYSIS] AT SER-40</scope>
    <scope>IDENTIFICATION BY MASS SPECTROMETRY [LARGE SCALE ANALYSIS]</scope>
    <source>
        <tissue>Cervix carcinoma</tissue>
    </source>
</reference>
<reference key="4">
    <citation type="journal article" date="2011" name="BMC Syst. Biol.">
        <title>Initial characterization of the human central proteome.</title>
        <authorList>
            <person name="Burkard T.R."/>
            <person name="Planyavsky M."/>
            <person name="Kaupe I."/>
            <person name="Breitwieser F.P."/>
            <person name="Buerckstuemmer T."/>
            <person name="Bennett K.L."/>
            <person name="Superti-Furga G."/>
            <person name="Colinge J."/>
        </authorList>
    </citation>
    <scope>IDENTIFICATION BY MASS SPECTROMETRY [LARGE SCALE ANALYSIS]</scope>
</reference>
<reference key="5">
    <citation type="journal article" date="2014" name="J. Proteomics">
        <title>An enzyme assisted RP-RPLC approach for in-depth analysis of human liver phosphoproteome.</title>
        <authorList>
            <person name="Bian Y."/>
            <person name="Song C."/>
            <person name="Cheng K."/>
            <person name="Dong M."/>
            <person name="Wang F."/>
            <person name="Huang J."/>
            <person name="Sun D."/>
            <person name="Wang L."/>
            <person name="Ye M."/>
            <person name="Zou H."/>
        </authorList>
    </citation>
    <scope>IDENTIFICATION BY MASS SPECTROMETRY [LARGE SCALE ANALYSIS]</scope>
    <source>
        <tissue>Liver</tissue>
    </source>
</reference>
<reference key="6">
    <citation type="journal article" date="2020" name="J. Cell Sci.">
        <title>A heterodimeric SNX4--SNX7 SNX-BAR autophagy complex coordinates ATG9A trafficking for efficient autophagosome assembly.</title>
        <authorList>
            <person name="Anton Z."/>
            <person name="Betin V.M.S."/>
            <person name="Simonetti B."/>
            <person name="Traer C.J."/>
            <person name="Attar N."/>
            <person name="Cullen P.J."/>
            <person name="Lane J.D."/>
        </authorList>
    </citation>
    <scope>FUNCTION</scope>
    <scope>SUBCELLULAR LOCATION</scope>
    <scope>INTERACTION WITH SNX4</scope>
</reference>
<evidence type="ECO:0000250" key="1">
    <source>
        <dbReference type="UniProtKB" id="O95219"/>
    </source>
</evidence>
<evidence type="ECO:0000250" key="2">
    <source>
        <dbReference type="UniProtKB" id="Q3UR97"/>
    </source>
</evidence>
<evidence type="ECO:0000250" key="3">
    <source>
        <dbReference type="UniProtKB" id="Q6P4T1"/>
    </source>
</evidence>
<evidence type="ECO:0000250" key="4">
    <source>
        <dbReference type="UniProtKB" id="Q8CE50"/>
    </source>
</evidence>
<evidence type="ECO:0000250" key="5">
    <source>
        <dbReference type="UniProtKB" id="Q96L94"/>
    </source>
</evidence>
<evidence type="ECO:0000255" key="6">
    <source>
        <dbReference type="PROSITE-ProRule" id="PRU00147"/>
    </source>
</evidence>
<evidence type="ECO:0000255" key="7">
    <source>
        <dbReference type="PROSITE-ProRule" id="PRU00361"/>
    </source>
</evidence>
<evidence type="ECO:0000256" key="8">
    <source>
        <dbReference type="SAM" id="MobiDB-lite"/>
    </source>
</evidence>
<evidence type="ECO:0000269" key="9">
    <source>
    </source>
</evidence>
<evidence type="ECO:0000303" key="10">
    <source>
    </source>
</evidence>
<evidence type="ECO:0000305" key="11"/>
<evidence type="ECO:0000312" key="12">
    <source>
        <dbReference type="HGNC" id="HGNC:23685"/>
    </source>
</evidence>
<evidence type="ECO:0007744" key="13">
    <source>
    </source>
</evidence>
<evidence type="ECO:0007744" key="14">
    <source>
    </source>
</evidence>
<gene>
    <name evidence="10 12" type="primary">SNX30</name>
</gene>
<dbReference type="EMBL" id="AL390067">
    <property type="status" value="NOT_ANNOTATED_CDS"/>
    <property type="molecule type" value="Genomic_DNA"/>
</dbReference>
<dbReference type="EMBL" id="AL360235">
    <property type="status" value="NOT_ANNOTATED_CDS"/>
    <property type="molecule type" value="Genomic_DNA"/>
</dbReference>
<dbReference type="EMBL" id="AL139041">
    <property type="status" value="NOT_ANNOTATED_CDS"/>
    <property type="molecule type" value="Genomic_DNA"/>
</dbReference>
<dbReference type="CCDS" id="CCDS43865.1"/>
<dbReference type="RefSeq" id="NP_001013012.1">
    <property type="nucleotide sequence ID" value="NM_001012994.2"/>
</dbReference>
<dbReference type="SMR" id="Q5VWJ9"/>
<dbReference type="BioGRID" id="135142">
    <property type="interactions" value="25"/>
</dbReference>
<dbReference type="FunCoup" id="Q5VWJ9">
    <property type="interactions" value="616"/>
</dbReference>
<dbReference type="IntAct" id="Q5VWJ9">
    <property type="interactions" value="9"/>
</dbReference>
<dbReference type="MINT" id="Q5VWJ9"/>
<dbReference type="STRING" id="9606.ENSP00000363349"/>
<dbReference type="TCDB" id="3.A.34.1.1">
    <property type="family name" value="the sorting nexins of the escrt complexes (sn-escrt)"/>
</dbReference>
<dbReference type="GlyGen" id="Q5VWJ9">
    <property type="glycosylation" value="3 sites, 1 O-linked glycan (1 site)"/>
</dbReference>
<dbReference type="iPTMnet" id="Q5VWJ9"/>
<dbReference type="MetOSite" id="Q5VWJ9"/>
<dbReference type="PhosphoSitePlus" id="Q5VWJ9"/>
<dbReference type="BioMuta" id="SNX30"/>
<dbReference type="DMDM" id="74747407"/>
<dbReference type="jPOST" id="Q5VWJ9"/>
<dbReference type="MassIVE" id="Q5VWJ9"/>
<dbReference type="PaxDb" id="9606-ENSP00000363349"/>
<dbReference type="PeptideAtlas" id="Q5VWJ9"/>
<dbReference type="ProteomicsDB" id="65531"/>
<dbReference type="Pumba" id="Q5VWJ9"/>
<dbReference type="Antibodypedia" id="7509">
    <property type="antibodies" value="97 antibodies from 20 providers"/>
</dbReference>
<dbReference type="DNASU" id="401548"/>
<dbReference type="Ensembl" id="ENST00000374232.8">
    <property type="protein sequence ID" value="ENSP00000363349.3"/>
    <property type="gene ID" value="ENSG00000148158.17"/>
</dbReference>
<dbReference type="GeneID" id="401548"/>
<dbReference type="KEGG" id="hsa:401548"/>
<dbReference type="MANE-Select" id="ENST00000374232.8">
    <property type="protein sequence ID" value="ENSP00000363349.3"/>
    <property type="RefSeq nucleotide sequence ID" value="NM_001012994.2"/>
    <property type="RefSeq protein sequence ID" value="NP_001013012.1"/>
</dbReference>
<dbReference type="UCSC" id="uc004bgj.5">
    <property type="organism name" value="human"/>
</dbReference>
<dbReference type="AGR" id="HGNC:23685"/>
<dbReference type="CTD" id="401548"/>
<dbReference type="DisGeNET" id="401548"/>
<dbReference type="GeneCards" id="SNX30"/>
<dbReference type="HGNC" id="HGNC:23685">
    <property type="gene designation" value="SNX30"/>
</dbReference>
<dbReference type="HPA" id="ENSG00000148158">
    <property type="expression patterns" value="Low tissue specificity"/>
</dbReference>
<dbReference type="MIM" id="620955">
    <property type="type" value="gene"/>
</dbReference>
<dbReference type="neXtProt" id="NX_Q5VWJ9"/>
<dbReference type="OpenTargets" id="ENSG00000148158"/>
<dbReference type="PharmGKB" id="PA142670889"/>
<dbReference type="VEuPathDB" id="HostDB:ENSG00000148158"/>
<dbReference type="eggNOG" id="KOG2273">
    <property type="taxonomic scope" value="Eukaryota"/>
</dbReference>
<dbReference type="GeneTree" id="ENSGT00940000158994"/>
<dbReference type="HOGENOM" id="CLU_040655_1_0_1"/>
<dbReference type="InParanoid" id="Q5VWJ9"/>
<dbReference type="OMA" id="WSLHRFI"/>
<dbReference type="OrthoDB" id="205639at2759"/>
<dbReference type="PAN-GO" id="Q5VWJ9">
    <property type="GO annotations" value="7 GO annotations based on evolutionary models"/>
</dbReference>
<dbReference type="PhylomeDB" id="Q5VWJ9"/>
<dbReference type="TreeFam" id="TF328543"/>
<dbReference type="PathwayCommons" id="Q5VWJ9"/>
<dbReference type="SignaLink" id="Q5VWJ9"/>
<dbReference type="BioGRID-ORCS" id="401548">
    <property type="hits" value="12 hits in 1153 CRISPR screens"/>
</dbReference>
<dbReference type="ChiTaRS" id="SNX30">
    <property type="organism name" value="human"/>
</dbReference>
<dbReference type="GenomeRNAi" id="401548"/>
<dbReference type="Pharos" id="Q5VWJ9">
    <property type="development level" value="Tdark"/>
</dbReference>
<dbReference type="PRO" id="PR:Q5VWJ9"/>
<dbReference type="Proteomes" id="UP000005640">
    <property type="component" value="Chromosome 9"/>
</dbReference>
<dbReference type="RNAct" id="Q5VWJ9">
    <property type="molecule type" value="protein"/>
</dbReference>
<dbReference type="Bgee" id="ENSG00000148158">
    <property type="expression patterns" value="Expressed in kidney epithelium and 175 other cell types or tissues"/>
</dbReference>
<dbReference type="ExpressionAtlas" id="Q5VWJ9">
    <property type="expression patterns" value="baseline and differential"/>
</dbReference>
<dbReference type="GO" id="GO:0005769">
    <property type="term" value="C:early endosome"/>
    <property type="evidence" value="ECO:0000314"/>
    <property type="project" value="UniProtKB"/>
</dbReference>
<dbReference type="GO" id="GO:0031901">
    <property type="term" value="C:early endosome membrane"/>
    <property type="evidence" value="ECO:0007669"/>
    <property type="project" value="UniProtKB-SubCell"/>
</dbReference>
<dbReference type="GO" id="GO:0000407">
    <property type="term" value="C:phagophore assembly site"/>
    <property type="evidence" value="ECO:0000318"/>
    <property type="project" value="GO_Central"/>
</dbReference>
<dbReference type="GO" id="GO:0035091">
    <property type="term" value="F:phosphatidylinositol binding"/>
    <property type="evidence" value="ECO:0007669"/>
    <property type="project" value="InterPro"/>
</dbReference>
<dbReference type="GO" id="GO:0032456">
    <property type="term" value="P:endocytic recycling"/>
    <property type="evidence" value="ECO:0000318"/>
    <property type="project" value="GO_Central"/>
</dbReference>
<dbReference type="GO" id="GO:0000423">
    <property type="term" value="P:mitophagy"/>
    <property type="evidence" value="ECO:0000318"/>
    <property type="project" value="GO_Central"/>
</dbReference>
<dbReference type="GO" id="GO:0034727">
    <property type="term" value="P:piecemeal microautophagy of the nucleus"/>
    <property type="evidence" value="ECO:0000318"/>
    <property type="project" value="GO_Central"/>
</dbReference>
<dbReference type="GO" id="GO:2000786">
    <property type="term" value="P:positive regulation of autophagosome assembly"/>
    <property type="evidence" value="ECO:0000315"/>
    <property type="project" value="UniProtKB"/>
</dbReference>
<dbReference type="GO" id="GO:0015031">
    <property type="term" value="P:protein transport"/>
    <property type="evidence" value="ECO:0000315"/>
    <property type="project" value="UniProtKB"/>
</dbReference>
<dbReference type="GO" id="GO:0061709">
    <property type="term" value="P:reticulophagy"/>
    <property type="evidence" value="ECO:0000318"/>
    <property type="project" value="GO_Central"/>
</dbReference>
<dbReference type="CDD" id="cd07667">
    <property type="entry name" value="BAR_SNX30"/>
    <property type="match status" value="1"/>
</dbReference>
<dbReference type="CDD" id="cd06860">
    <property type="entry name" value="PX_SNX7_30_like"/>
    <property type="match status" value="1"/>
</dbReference>
<dbReference type="Gene3D" id="1.20.1270.60">
    <property type="entry name" value="Arfaptin homology (AH) domain/BAR domain"/>
    <property type="match status" value="1"/>
</dbReference>
<dbReference type="Gene3D" id="3.30.1520.10">
    <property type="entry name" value="Phox-like domain"/>
    <property type="match status" value="1"/>
</dbReference>
<dbReference type="InterPro" id="IPR027267">
    <property type="entry name" value="AH/BAR_dom_sf"/>
</dbReference>
<dbReference type="InterPro" id="IPR004148">
    <property type="entry name" value="BAR_dom"/>
</dbReference>
<dbReference type="InterPro" id="IPR001683">
    <property type="entry name" value="PX_dom"/>
</dbReference>
<dbReference type="InterPro" id="IPR036871">
    <property type="entry name" value="PX_dom_sf"/>
</dbReference>
<dbReference type="InterPro" id="IPR028649">
    <property type="entry name" value="SNX30_BAR"/>
</dbReference>
<dbReference type="PANTHER" id="PTHR45949:SF1">
    <property type="entry name" value="SORTING NEXIN-30"/>
    <property type="match status" value="1"/>
</dbReference>
<dbReference type="PANTHER" id="PTHR45949">
    <property type="entry name" value="SORTING NEXIN-4"/>
    <property type="match status" value="1"/>
</dbReference>
<dbReference type="Pfam" id="PF03114">
    <property type="entry name" value="BAR"/>
    <property type="match status" value="1"/>
</dbReference>
<dbReference type="Pfam" id="PF00787">
    <property type="entry name" value="PX"/>
    <property type="match status" value="1"/>
</dbReference>
<dbReference type="SMART" id="SM00312">
    <property type="entry name" value="PX"/>
    <property type="match status" value="1"/>
</dbReference>
<dbReference type="SUPFAM" id="SSF103657">
    <property type="entry name" value="BAR/IMD domain-like"/>
    <property type="match status" value="1"/>
</dbReference>
<dbReference type="SUPFAM" id="SSF64268">
    <property type="entry name" value="PX domain"/>
    <property type="match status" value="1"/>
</dbReference>
<dbReference type="PROSITE" id="PS50195">
    <property type="entry name" value="PX"/>
    <property type="match status" value="1"/>
</dbReference>
<proteinExistence type="evidence at protein level"/>
<protein>
    <recommendedName>
        <fullName evidence="10">Sorting nexin-30</fullName>
    </recommendedName>
</protein>
<organism>
    <name type="scientific">Homo sapiens</name>
    <name type="common">Human</name>
    <dbReference type="NCBI Taxonomy" id="9606"/>
    <lineage>
        <taxon>Eukaryota</taxon>
        <taxon>Metazoa</taxon>
        <taxon>Chordata</taxon>
        <taxon>Craniata</taxon>
        <taxon>Vertebrata</taxon>
        <taxon>Euteleostomi</taxon>
        <taxon>Mammalia</taxon>
        <taxon>Eutheria</taxon>
        <taxon>Euarchontoglires</taxon>
        <taxon>Primates</taxon>
        <taxon>Haplorrhini</taxon>
        <taxon>Catarrhini</taxon>
        <taxon>Hominidae</taxon>
        <taxon>Homo</taxon>
    </lineage>
</organism>
<accession>Q5VWJ9</accession>
<name>SNX30_HUMAN</name>
<sequence>MAGGPPKALPSTGPHSLRDMPHPLAGSSSEEAVGGDSTPSPDLLMARSFGDKDLILPNGGTPAGTSSPASSSSLLNRLQLDDDIDGETRDLFVIVDDPKKHVCTMETYITYRITTKSTRVEFDLPEYSVRRRYQDFDWLRSKLEESQPTHLIPPLPEKFVVKGVVDRFSEEFVETRRKALDKFLKRITDHPVLSFNEHFNIFLTAKDLNAYKKQGIALLTRMGESVKHVTGGYKLRTRPLEFAAIGDYLDTFALKLGTIDRIAQRIIKEEIEYLVELREYGPVYSTWSALEGELAEPLEGVSACIGNCSTALEELTDDMTEDFLPVLREYILYSDSMKSVLKKRDQVQAEYEAKLEAVALRKEDRPKVPADVEKCQDRMECFNADLKADMERWQNNKRQDFRQLLMGMADKNIQYYEKCLMAWESIIPLLQEKQEAK</sequence>